<proteinExistence type="inferred from homology"/>
<name>GLMM_EXISA</name>
<gene>
    <name evidence="1" type="primary">glmM</name>
    <name type="ordered locus">EAT1b_1591</name>
</gene>
<protein>
    <recommendedName>
        <fullName evidence="1">Phosphoglucosamine mutase</fullName>
        <ecNumber evidence="1">5.4.2.10</ecNumber>
    </recommendedName>
</protein>
<accession>C4KZK4</accession>
<feature type="chain" id="PRO_1000215491" description="Phosphoglucosamine mutase">
    <location>
        <begin position="1"/>
        <end position="452"/>
    </location>
</feature>
<feature type="active site" description="Phosphoserine intermediate" evidence="1">
    <location>
        <position position="103"/>
    </location>
</feature>
<feature type="binding site" description="via phosphate group" evidence="1">
    <location>
        <position position="103"/>
    </location>
    <ligand>
        <name>Mg(2+)</name>
        <dbReference type="ChEBI" id="CHEBI:18420"/>
    </ligand>
</feature>
<feature type="binding site" evidence="1">
    <location>
        <position position="243"/>
    </location>
    <ligand>
        <name>Mg(2+)</name>
        <dbReference type="ChEBI" id="CHEBI:18420"/>
    </ligand>
</feature>
<feature type="binding site" evidence="1">
    <location>
        <position position="245"/>
    </location>
    <ligand>
        <name>Mg(2+)</name>
        <dbReference type="ChEBI" id="CHEBI:18420"/>
    </ligand>
</feature>
<feature type="binding site" evidence="1">
    <location>
        <position position="247"/>
    </location>
    <ligand>
        <name>Mg(2+)</name>
        <dbReference type="ChEBI" id="CHEBI:18420"/>
    </ligand>
</feature>
<feature type="modified residue" description="Phosphoserine" evidence="1">
    <location>
        <position position="103"/>
    </location>
</feature>
<evidence type="ECO:0000255" key="1">
    <source>
        <dbReference type="HAMAP-Rule" id="MF_01554"/>
    </source>
</evidence>
<comment type="function">
    <text evidence="1">Catalyzes the conversion of glucosamine-6-phosphate to glucosamine-1-phosphate.</text>
</comment>
<comment type="catalytic activity">
    <reaction evidence="1">
        <text>alpha-D-glucosamine 1-phosphate = D-glucosamine 6-phosphate</text>
        <dbReference type="Rhea" id="RHEA:23424"/>
        <dbReference type="ChEBI" id="CHEBI:58516"/>
        <dbReference type="ChEBI" id="CHEBI:58725"/>
        <dbReference type="EC" id="5.4.2.10"/>
    </reaction>
</comment>
<comment type="cofactor">
    <cofactor evidence="1">
        <name>Mg(2+)</name>
        <dbReference type="ChEBI" id="CHEBI:18420"/>
    </cofactor>
    <text evidence="1">Binds 1 Mg(2+) ion per subunit.</text>
</comment>
<comment type="PTM">
    <text evidence="1">Activated by phosphorylation.</text>
</comment>
<comment type="similarity">
    <text evidence="1">Belongs to the phosphohexose mutase family.</text>
</comment>
<organism>
    <name type="scientific">Exiguobacterium sp. (strain ATCC BAA-1283 / AT1b)</name>
    <dbReference type="NCBI Taxonomy" id="360911"/>
    <lineage>
        <taxon>Bacteria</taxon>
        <taxon>Bacillati</taxon>
        <taxon>Bacillota</taxon>
        <taxon>Bacilli</taxon>
        <taxon>Bacillales</taxon>
        <taxon>Bacillales Family XII. Incertae Sedis</taxon>
        <taxon>Exiguobacterium</taxon>
    </lineage>
</organism>
<keyword id="KW-0413">Isomerase</keyword>
<keyword id="KW-0460">Magnesium</keyword>
<keyword id="KW-0479">Metal-binding</keyword>
<keyword id="KW-0597">Phosphoprotein</keyword>
<dbReference type="EC" id="5.4.2.10" evidence="1"/>
<dbReference type="EMBL" id="CP001615">
    <property type="protein sequence ID" value="ACQ70517.1"/>
    <property type="molecule type" value="Genomic_DNA"/>
</dbReference>
<dbReference type="RefSeq" id="WP_012727636.1">
    <property type="nucleotide sequence ID" value="NC_012673.1"/>
</dbReference>
<dbReference type="SMR" id="C4KZK4"/>
<dbReference type="STRING" id="360911.EAT1b_1591"/>
<dbReference type="KEGG" id="eat:EAT1b_1591"/>
<dbReference type="eggNOG" id="COG1109">
    <property type="taxonomic scope" value="Bacteria"/>
</dbReference>
<dbReference type="HOGENOM" id="CLU_016950_7_0_9"/>
<dbReference type="OrthoDB" id="9806956at2"/>
<dbReference type="Proteomes" id="UP000000716">
    <property type="component" value="Chromosome"/>
</dbReference>
<dbReference type="GO" id="GO:0005829">
    <property type="term" value="C:cytosol"/>
    <property type="evidence" value="ECO:0007669"/>
    <property type="project" value="TreeGrafter"/>
</dbReference>
<dbReference type="GO" id="GO:0000287">
    <property type="term" value="F:magnesium ion binding"/>
    <property type="evidence" value="ECO:0007669"/>
    <property type="project" value="UniProtKB-UniRule"/>
</dbReference>
<dbReference type="GO" id="GO:0008966">
    <property type="term" value="F:phosphoglucosamine mutase activity"/>
    <property type="evidence" value="ECO:0007669"/>
    <property type="project" value="UniProtKB-UniRule"/>
</dbReference>
<dbReference type="GO" id="GO:0004615">
    <property type="term" value="F:phosphomannomutase activity"/>
    <property type="evidence" value="ECO:0007669"/>
    <property type="project" value="TreeGrafter"/>
</dbReference>
<dbReference type="GO" id="GO:0005975">
    <property type="term" value="P:carbohydrate metabolic process"/>
    <property type="evidence" value="ECO:0007669"/>
    <property type="project" value="InterPro"/>
</dbReference>
<dbReference type="GO" id="GO:0009252">
    <property type="term" value="P:peptidoglycan biosynthetic process"/>
    <property type="evidence" value="ECO:0007669"/>
    <property type="project" value="TreeGrafter"/>
</dbReference>
<dbReference type="GO" id="GO:0006048">
    <property type="term" value="P:UDP-N-acetylglucosamine biosynthetic process"/>
    <property type="evidence" value="ECO:0007669"/>
    <property type="project" value="TreeGrafter"/>
</dbReference>
<dbReference type="CDD" id="cd05802">
    <property type="entry name" value="GlmM"/>
    <property type="match status" value="1"/>
</dbReference>
<dbReference type="FunFam" id="3.30.310.50:FF:000001">
    <property type="entry name" value="Phosphoglucosamine mutase"/>
    <property type="match status" value="1"/>
</dbReference>
<dbReference type="FunFam" id="3.40.120.10:FF:000001">
    <property type="entry name" value="Phosphoglucosamine mutase"/>
    <property type="match status" value="1"/>
</dbReference>
<dbReference type="FunFam" id="3.40.120.10:FF:000002">
    <property type="entry name" value="Phosphoglucosamine mutase"/>
    <property type="match status" value="1"/>
</dbReference>
<dbReference type="Gene3D" id="3.40.120.10">
    <property type="entry name" value="Alpha-D-Glucose-1,6-Bisphosphate, subunit A, domain 3"/>
    <property type="match status" value="3"/>
</dbReference>
<dbReference type="Gene3D" id="3.30.310.50">
    <property type="entry name" value="Alpha-D-phosphohexomutase, C-terminal domain"/>
    <property type="match status" value="1"/>
</dbReference>
<dbReference type="HAMAP" id="MF_01554_B">
    <property type="entry name" value="GlmM_B"/>
    <property type="match status" value="1"/>
</dbReference>
<dbReference type="InterPro" id="IPR005844">
    <property type="entry name" value="A-D-PHexomutase_a/b/a-I"/>
</dbReference>
<dbReference type="InterPro" id="IPR016055">
    <property type="entry name" value="A-D-PHexomutase_a/b/a-I/II/III"/>
</dbReference>
<dbReference type="InterPro" id="IPR005845">
    <property type="entry name" value="A-D-PHexomutase_a/b/a-II"/>
</dbReference>
<dbReference type="InterPro" id="IPR005846">
    <property type="entry name" value="A-D-PHexomutase_a/b/a-III"/>
</dbReference>
<dbReference type="InterPro" id="IPR005843">
    <property type="entry name" value="A-D-PHexomutase_C"/>
</dbReference>
<dbReference type="InterPro" id="IPR036900">
    <property type="entry name" value="A-D-PHexomutase_C_sf"/>
</dbReference>
<dbReference type="InterPro" id="IPR016066">
    <property type="entry name" value="A-D-PHexomutase_CS"/>
</dbReference>
<dbReference type="InterPro" id="IPR005841">
    <property type="entry name" value="Alpha-D-phosphohexomutase_SF"/>
</dbReference>
<dbReference type="InterPro" id="IPR006352">
    <property type="entry name" value="GlmM_bact"/>
</dbReference>
<dbReference type="InterPro" id="IPR050060">
    <property type="entry name" value="Phosphoglucosamine_mutase"/>
</dbReference>
<dbReference type="NCBIfam" id="TIGR01455">
    <property type="entry name" value="glmM"/>
    <property type="match status" value="1"/>
</dbReference>
<dbReference type="NCBIfam" id="NF008139">
    <property type="entry name" value="PRK10887.1"/>
    <property type="match status" value="1"/>
</dbReference>
<dbReference type="PANTHER" id="PTHR42946:SF1">
    <property type="entry name" value="PHOSPHOGLUCOMUTASE (ALPHA-D-GLUCOSE-1,6-BISPHOSPHATE-DEPENDENT)"/>
    <property type="match status" value="1"/>
</dbReference>
<dbReference type="PANTHER" id="PTHR42946">
    <property type="entry name" value="PHOSPHOHEXOSE MUTASE"/>
    <property type="match status" value="1"/>
</dbReference>
<dbReference type="Pfam" id="PF02878">
    <property type="entry name" value="PGM_PMM_I"/>
    <property type="match status" value="1"/>
</dbReference>
<dbReference type="Pfam" id="PF02879">
    <property type="entry name" value="PGM_PMM_II"/>
    <property type="match status" value="1"/>
</dbReference>
<dbReference type="Pfam" id="PF02880">
    <property type="entry name" value="PGM_PMM_III"/>
    <property type="match status" value="1"/>
</dbReference>
<dbReference type="Pfam" id="PF00408">
    <property type="entry name" value="PGM_PMM_IV"/>
    <property type="match status" value="1"/>
</dbReference>
<dbReference type="PRINTS" id="PR00509">
    <property type="entry name" value="PGMPMM"/>
</dbReference>
<dbReference type="SUPFAM" id="SSF55957">
    <property type="entry name" value="Phosphoglucomutase, C-terminal domain"/>
    <property type="match status" value="1"/>
</dbReference>
<dbReference type="SUPFAM" id="SSF53738">
    <property type="entry name" value="Phosphoglucomutase, first 3 domains"/>
    <property type="match status" value="3"/>
</dbReference>
<dbReference type="PROSITE" id="PS00710">
    <property type="entry name" value="PGM_PMM"/>
    <property type="match status" value="1"/>
</dbReference>
<reference key="1">
    <citation type="journal article" date="2011" name="J. Bacteriol.">
        <title>Complete genome sequence of the Thermophilic Bacterium Exiguobacterium sp. AT1b.</title>
        <authorList>
            <person name="Vishnivetskaya T.A."/>
            <person name="Lucas S."/>
            <person name="Copeland A."/>
            <person name="Lapidus A."/>
            <person name="Glavina del Rio T."/>
            <person name="Dalin E."/>
            <person name="Tice H."/>
            <person name="Bruce D.C."/>
            <person name="Goodwin L.A."/>
            <person name="Pitluck S."/>
            <person name="Saunders E."/>
            <person name="Brettin T."/>
            <person name="Detter C."/>
            <person name="Han C."/>
            <person name="Larimer F."/>
            <person name="Land M.L."/>
            <person name="Hauser L.J."/>
            <person name="Kyrpides N.C."/>
            <person name="Ovchinnikova G."/>
            <person name="Kathariou S."/>
            <person name="Ramaley R.F."/>
            <person name="Rodrigues D.F."/>
            <person name="Hendrix C."/>
            <person name="Richardson P."/>
            <person name="Tiedje J.M."/>
        </authorList>
    </citation>
    <scope>NUCLEOTIDE SEQUENCE [LARGE SCALE GENOMIC DNA]</scope>
    <source>
        <strain>ATCC BAA-1283 / AT1b</strain>
    </source>
</reference>
<sequence>MGKYFGTDGVRGVANSELTAELAYRLGRAGGYVLSKHLPEGEQPKVLIGRDTRISGHMLEGALIAGLLSIGAEVMRLGVISTPGVAYLTKSLDATAGVMISASHNPVADNGIKFFGSDGFKLDDATEQEIEDILDAAEDTLPRPTGKDLGFVSDYYEGAQKYLQMLKQTVEEDFDGLHIALDCAHGATSGLAARLFADLEANVSTIGNSPNGLNINEGVGSTHPEHLAEFVREKGADMGLAFDGDGDRLIAIDENGDIVDGDKIMYICGKYLSEKGRLKDNTIVATVMSNLGFHKAVEEAGMTALQTAVGDRYVVEEMKKHQYTLGGEQSGHLIFLDHSTTGDGMLSGVQLAEIVKSTGRKLSELAAEMPVYPQKLVNIRVTNKNDAMNGERVLATIQEAEAEMAGNGRILVRASGTEPLVRVMAEAPTAEECDRYVEKIAQVVREDYGVDG</sequence>